<dbReference type="EMBL" id="AE016830">
    <property type="protein sequence ID" value="AAO82180.1"/>
    <property type="molecule type" value="Genomic_DNA"/>
</dbReference>
<dbReference type="RefSeq" id="NP_816110.1">
    <property type="nucleotide sequence ID" value="NC_004668.1"/>
</dbReference>
<dbReference type="RefSeq" id="WP_002356679.1">
    <property type="nucleotide sequence ID" value="NZ_KE136528.1"/>
</dbReference>
<dbReference type="SMR" id="Q831N9"/>
<dbReference type="STRING" id="226185.EF_2462"/>
<dbReference type="EnsemblBacteria" id="AAO82180">
    <property type="protein sequence ID" value="AAO82180"/>
    <property type="gene ID" value="EF_2462"/>
</dbReference>
<dbReference type="KEGG" id="efa:EF2462"/>
<dbReference type="PATRIC" id="fig|226185.45.peg.1083"/>
<dbReference type="eggNOG" id="COG4476">
    <property type="taxonomic scope" value="Bacteria"/>
</dbReference>
<dbReference type="HOGENOM" id="CLU_166693_0_0_9"/>
<dbReference type="Proteomes" id="UP000001415">
    <property type="component" value="Chromosome"/>
</dbReference>
<dbReference type="Gene3D" id="1.10.220.80">
    <property type="entry name" value="BH2638-like"/>
    <property type="match status" value="1"/>
</dbReference>
<dbReference type="HAMAP" id="MF_01041">
    <property type="entry name" value="UPF0223"/>
    <property type="match status" value="1"/>
</dbReference>
<dbReference type="InterPro" id="IPR023324">
    <property type="entry name" value="BH2638-like_sf"/>
</dbReference>
<dbReference type="InterPro" id="IPR007920">
    <property type="entry name" value="UPF0223"/>
</dbReference>
<dbReference type="NCBIfam" id="NF003353">
    <property type="entry name" value="PRK04387.1"/>
    <property type="match status" value="1"/>
</dbReference>
<dbReference type="Pfam" id="PF05256">
    <property type="entry name" value="UPF0223"/>
    <property type="match status" value="1"/>
</dbReference>
<dbReference type="PIRSF" id="PIRSF037260">
    <property type="entry name" value="UPF0223"/>
    <property type="match status" value="1"/>
</dbReference>
<dbReference type="SUPFAM" id="SSF158504">
    <property type="entry name" value="BH2638-like"/>
    <property type="match status" value="1"/>
</dbReference>
<organism>
    <name type="scientific">Enterococcus faecalis (strain ATCC 700802 / V583)</name>
    <dbReference type="NCBI Taxonomy" id="226185"/>
    <lineage>
        <taxon>Bacteria</taxon>
        <taxon>Bacillati</taxon>
        <taxon>Bacillota</taxon>
        <taxon>Bacilli</taxon>
        <taxon>Lactobacillales</taxon>
        <taxon>Enterococcaceae</taxon>
        <taxon>Enterococcus</taxon>
    </lineage>
</organism>
<accession>Q831N9</accession>
<evidence type="ECO:0000255" key="1">
    <source>
        <dbReference type="HAMAP-Rule" id="MF_01041"/>
    </source>
</evidence>
<keyword id="KW-1185">Reference proteome</keyword>
<name>Y2462_ENTFA</name>
<reference key="1">
    <citation type="journal article" date="2003" name="Science">
        <title>Role of mobile DNA in the evolution of vancomycin-resistant Enterococcus faecalis.</title>
        <authorList>
            <person name="Paulsen I.T."/>
            <person name="Banerjei L."/>
            <person name="Myers G.S.A."/>
            <person name="Nelson K.E."/>
            <person name="Seshadri R."/>
            <person name="Read T.D."/>
            <person name="Fouts D.E."/>
            <person name="Eisen J.A."/>
            <person name="Gill S.R."/>
            <person name="Heidelberg J.F."/>
            <person name="Tettelin H."/>
            <person name="Dodson R.J."/>
            <person name="Umayam L.A."/>
            <person name="Brinkac L.M."/>
            <person name="Beanan M.J."/>
            <person name="Daugherty S.C."/>
            <person name="DeBoy R.T."/>
            <person name="Durkin S.A."/>
            <person name="Kolonay J.F."/>
            <person name="Madupu R."/>
            <person name="Nelson W.C."/>
            <person name="Vamathevan J.J."/>
            <person name="Tran B."/>
            <person name="Upton J."/>
            <person name="Hansen T."/>
            <person name="Shetty J."/>
            <person name="Khouri H.M."/>
            <person name="Utterback T.R."/>
            <person name="Radune D."/>
            <person name="Ketchum K.A."/>
            <person name="Dougherty B.A."/>
            <person name="Fraser C.M."/>
        </authorList>
    </citation>
    <scope>NUCLEOTIDE SEQUENCE [LARGE SCALE GENOMIC DNA]</scope>
    <source>
        <strain>ATCC 700802 / V583</strain>
    </source>
</reference>
<protein>
    <recommendedName>
        <fullName evidence="1">UPF0223 protein EF_2462</fullName>
    </recommendedName>
</protein>
<proteinExistence type="inferred from homology"/>
<comment type="similarity">
    <text evidence="1">Belongs to the UPF0223 family.</text>
</comment>
<gene>
    <name type="ordered locus">EF_2462</name>
</gene>
<feature type="chain" id="PRO_0000216676" description="UPF0223 protein EF_2462">
    <location>
        <begin position="1"/>
        <end position="92"/>
    </location>
</feature>
<sequence length="92" mass="10602">MKDYQYPLDLDWTTEEMVIVTNMWTAVEQANETGLPVDKFLTTYQQFKTVVKSIGEEKRLGREFENASGYSLYRTLQQAKKQGSGKLKLGDD</sequence>